<feature type="chain" id="PRO_1000002353" description="Cobyric acid synthase">
    <location>
        <begin position="1"/>
        <end position="487"/>
    </location>
</feature>
<feature type="domain" description="GATase cobBQ-type" evidence="1">
    <location>
        <begin position="249"/>
        <end position="435"/>
    </location>
</feature>
<feature type="active site" description="Nucleophile" evidence="1">
    <location>
        <position position="330"/>
    </location>
</feature>
<feature type="active site" evidence="1">
    <location>
        <position position="427"/>
    </location>
</feature>
<sequence length="487" mass="54632">MKYKSIMLLGTASSVGKSTVAAAFCRYFKKKGYRVAPYKALNISLNSFVTKEGDEIGRAQVVQAEACEIDPKEYMNPILMKPSAGFKTQVIVRGKVHCTMDAYKYKELNKYLKEKAKEAYDDISNDYDLIVLEGSGSCAEINLRETDIANMHTAKIADADVILVADINRGGVFASIVGTIMLLTEEERKRVKGVIINKFRGKREFFEPAMRQIEEIIKIPVLGVMPYFDLDIEEEDSASIKLRKGNGKGIDIAIVRLPHMSNFTDFNSLGRIKDVGIRYAENPKDLENANMIIIPGSKNTIDDLIYLKESGFKEALINESSNGKLIFGICGGYQILGEKIIDSLGVEGDIREEEGLGLLNIVTSFNKEKTTKQVVAFDLEGNEVSGYEIHNGESVPTAKENIWIKEKNGNVLGMNNKEQNVFGTYIHGIFDEGDFGEKLINKLKKELNIEESNEVNYKDYKMSQYDKLCELLEENIDMAYVENLIRS</sequence>
<accession>Q0TRJ4</accession>
<dbReference type="EMBL" id="CP000246">
    <property type="protein sequence ID" value="ABG83464.1"/>
    <property type="molecule type" value="Genomic_DNA"/>
</dbReference>
<dbReference type="RefSeq" id="WP_011010197.1">
    <property type="nucleotide sequence ID" value="NC_008261.1"/>
</dbReference>
<dbReference type="SMR" id="Q0TRJ4"/>
<dbReference type="STRING" id="195103.CPF_1300"/>
<dbReference type="PaxDb" id="195103-CPF_1300"/>
<dbReference type="GeneID" id="93002387"/>
<dbReference type="KEGG" id="cpf:CPF_1300"/>
<dbReference type="eggNOG" id="COG1492">
    <property type="taxonomic scope" value="Bacteria"/>
</dbReference>
<dbReference type="HOGENOM" id="CLU_019250_2_2_9"/>
<dbReference type="UniPathway" id="UPA00148"/>
<dbReference type="Proteomes" id="UP000001823">
    <property type="component" value="Chromosome"/>
</dbReference>
<dbReference type="GO" id="GO:0015420">
    <property type="term" value="F:ABC-type vitamin B12 transporter activity"/>
    <property type="evidence" value="ECO:0007669"/>
    <property type="project" value="UniProtKB-UniRule"/>
</dbReference>
<dbReference type="GO" id="GO:0003824">
    <property type="term" value="F:catalytic activity"/>
    <property type="evidence" value="ECO:0007669"/>
    <property type="project" value="InterPro"/>
</dbReference>
<dbReference type="GO" id="GO:0009236">
    <property type="term" value="P:cobalamin biosynthetic process"/>
    <property type="evidence" value="ECO:0007669"/>
    <property type="project" value="UniProtKB-UniRule"/>
</dbReference>
<dbReference type="CDD" id="cd05389">
    <property type="entry name" value="CobQ_N"/>
    <property type="match status" value="1"/>
</dbReference>
<dbReference type="CDD" id="cd01750">
    <property type="entry name" value="GATase1_CobQ"/>
    <property type="match status" value="1"/>
</dbReference>
<dbReference type="Gene3D" id="3.40.50.880">
    <property type="match status" value="1"/>
</dbReference>
<dbReference type="Gene3D" id="3.40.50.300">
    <property type="entry name" value="P-loop containing nucleotide triphosphate hydrolases"/>
    <property type="match status" value="1"/>
</dbReference>
<dbReference type="HAMAP" id="MF_00028">
    <property type="entry name" value="CobQ"/>
    <property type="match status" value="1"/>
</dbReference>
<dbReference type="InterPro" id="IPR029062">
    <property type="entry name" value="Class_I_gatase-like"/>
</dbReference>
<dbReference type="InterPro" id="IPR002586">
    <property type="entry name" value="CobQ/CobB/MinD/ParA_Nub-bd_dom"/>
</dbReference>
<dbReference type="InterPro" id="IPR033949">
    <property type="entry name" value="CobQ_GATase1"/>
</dbReference>
<dbReference type="InterPro" id="IPR047045">
    <property type="entry name" value="CobQ_N"/>
</dbReference>
<dbReference type="InterPro" id="IPR004459">
    <property type="entry name" value="CobQ_synth"/>
</dbReference>
<dbReference type="InterPro" id="IPR011698">
    <property type="entry name" value="GATase_3"/>
</dbReference>
<dbReference type="InterPro" id="IPR027417">
    <property type="entry name" value="P-loop_NTPase"/>
</dbReference>
<dbReference type="NCBIfam" id="TIGR00313">
    <property type="entry name" value="cobQ"/>
    <property type="match status" value="1"/>
</dbReference>
<dbReference type="NCBIfam" id="NF001989">
    <property type="entry name" value="PRK00784.1"/>
    <property type="match status" value="1"/>
</dbReference>
<dbReference type="PANTHER" id="PTHR21343:SF1">
    <property type="entry name" value="COBYRIC ACID SYNTHASE"/>
    <property type="match status" value="1"/>
</dbReference>
<dbReference type="PANTHER" id="PTHR21343">
    <property type="entry name" value="DETHIOBIOTIN SYNTHETASE"/>
    <property type="match status" value="1"/>
</dbReference>
<dbReference type="Pfam" id="PF01656">
    <property type="entry name" value="CbiA"/>
    <property type="match status" value="1"/>
</dbReference>
<dbReference type="Pfam" id="PF07685">
    <property type="entry name" value="GATase_3"/>
    <property type="match status" value="1"/>
</dbReference>
<dbReference type="SUPFAM" id="SSF52317">
    <property type="entry name" value="Class I glutamine amidotransferase-like"/>
    <property type="match status" value="1"/>
</dbReference>
<dbReference type="SUPFAM" id="SSF52540">
    <property type="entry name" value="P-loop containing nucleoside triphosphate hydrolases"/>
    <property type="match status" value="1"/>
</dbReference>
<dbReference type="PROSITE" id="PS51274">
    <property type="entry name" value="GATASE_COBBQ"/>
    <property type="match status" value="1"/>
</dbReference>
<name>COBQ_CLOP1</name>
<proteinExistence type="inferred from homology"/>
<gene>
    <name evidence="1" type="primary">cobQ</name>
    <name type="ordered locus">CPF_1300</name>
</gene>
<comment type="function">
    <text evidence="1">Catalyzes amidations at positions B, D, E, and G on adenosylcobyrinic A,C-diamide. NH(2) groups are provided by glutamine, and one molecule of ATP is hydrogenolyzed for each amidation.</text>
</comment>
<comment type="pathway">
    <text evidence="1">Cofactor biosynthesis; adenosylcobalamin biosynthesis.</text>
</comment>
<comment type="similarity">
    <text evidence="1">Belongs to the CobB/CobQ family. CobQ subfamily.</text>
</comment>
<evidence type="ECO:0000255" key="1">
    <source>
        <dbReference type="HAMAP-Rule" id="MF_00028"/>
    </source>
</evidence>
<organism>
    <name type="scientific">Clostridium perfringens (strain ATCC 13124 / DSM 756 / JCM 1290 / NCIMB 6125 / NCTC 8237 / Type A)</name>
    <dbReference type="NCBI Taxonomy" id="195103"/>
    <lineage>
        <taxon>Bacteria</taxon>
        <taxon>Bacillati</taxon>
        <taxon>Bacillota</taxon>
        <taxon>Clostridia</taxon>
        <taxon>Eubacteriales</taxon>
        <taxon>Clostridiaceae</taxon>
        <taxon>Clostridium</taxon>
    </lineage>
</organism>
<keyword id="KW-0169">Cobalamin biosynthesis</keyword>
<keyword id="KW-0315">Glutamine amidotransferase</keyword>
<protein>
    <recommendedName>
        <fullName evidence="1">Cobyric acid synthase</fullName>
    </recommendedName>
</protein>
<reference key="1">
    <citation type="journal article" date="2006" name="Genome Res.">
        <title>Skewed genomic variability in strains of the toxigenic bacterial pathogen, Clostridium perfringens.</title>
        <authorList>
            <person name="Myers G.S.A."/>
            <person name="Rasko D.A."/>
            <person name="Cheung J.K."/>
            <person name="Ravel J."/>
            <person name="Seshadri R."/>
            <person name="DeBoy R.T."/>
            <person name="Ren Q."/>
            <person name="Varga J."/>
            <person name="Awad M.M."/>
            <person name="Brinkac L.M."/>
            <person name="Daugherty S.C."/>
            <person name="Haft D.H."/>
            <person name="Dodson R.J."/>
            <person name="Madupu R."/>
            <person name="Nelson W.C."/>
            <person name="Rosovitz M.J."/>
            <person name="Sullivan S.A."/>
            <person name="Khouri H."/>
            <person name="Dimitrov G.I."/>
            <person name="Watkins K.L."/>
            <person name="Mulligan S."/>
            <person name="Benton J."/>
            <person name="Radune D."/>
            <person name="Fisher D.J."/>
            <person name="Atkins H.S."/>
            <person name="Hiscox T."/>
            <person name="Jost B.H."/>
            <person name="Billington S.J."/>
            <person name="Songer J.G."/>
            <person name="McClane B.A."/>
            <person name="Titball R.W."/>
            <person name="Rood J.I."/>
            <person name="Melville S.B."/>
            <person name="Paulsen I.T."/>
        </authorList>
    </citation>
    <scope>NUCLEOTIDE SEQUENCE [LARGE SCALE GENOMIC DNA]</scope>
    <source>
        <strain>ATCC 13124 / DSM 756 / JCM 1290 / NCIMB 6125 / NCTC 8237 / S 107 / Type A</strain>
    </source>
</reference>